<name>PSBL_BARVE</name>
<gene>
    <name evidence="1" type="primary">psbL</name>
</gene>
<dbReference type="EMBL" id="AP009370">
    <property type="protein sequence ID" value="BAF50125.1"/>
    <property type="molecule type" value="Genomic_DNA"/>
</dbReference>
<dbReference type="RefSeq" id="YP_001123301.1">
    <property type="nucleotide sequence ID" value="NC_009269.1"/>
</dbReference>
<dbReference type="SMR" id="A4QKC0"/>
<dbReference type="GeneID" id="4961844"/>
<dbReference type="GO" id="GO:0009535">
    <property type="term" value="C:chloroplast thylakoid membrane"/>
    <property type="evidence" value="ECO:0007669"/>
    <property type="project" value="UniProtKB-SubCell"/>
</dbReference>
<dbReference type="GO" id="GO:0009539">
    <property type="term" value="C:photosystem II reaction center"/>
    <property type="evidence" value="ECO:0007669"/>
    <property type="project" value="InterPro"/>
</dbReference>
<dbReference type="GO" id="GO:0015979">
    <property type="term" value="P:photosynthesis"/>
    <property type="evidence" value="ECO:0007669"/>
    <property type="project" value="UniProtKB-UniRule"/>
</dbReference>
<dbReference type="HAMAP" id="MF_01317">
    <property type="entry name" value="PSII_PsbL"/>
    <property type="match status" value="1"/>
</dbReference>
<dbReference type="InterPro" id="IPR003372">
    <property type="entry name" value="PSII_PsbL"/>
</dbReference>
<dbReference type="InterPro" id="IPR037266">
    <property type="entry name" value="PSII_PsbL_sf"/>
</dbReference>
<dbReference type="NCBIfam" id="NF001972">
    <property type="entry name" value="PRK00753.1"/>
    <property type="match status" value="1"/>
</dbReference>
<dbReference type="Pfam" id="PF02419">
    <property type="entry name" value="PsbL"/>
    <property type="match status" value="1"/>
</dbReference>
<dbReference type="SUPFAM" id="SSF161017">
    <property type="entry name" value="Photosystem II reaction center protein L, PsbL"/>
    <property type="match status" value="1"/>
</dbReference>
<protein>
    <recommendedName>
        <fullName evidence="1">Photosystem II reaction center protein L</fullName>
        <shortName evidence="1">PSII-L</shortName>
    </recommendedName>
</protein>
<organism>
    <name type="scientific">Barbarea verna</name>
    <name type="common">Land cress</name>
    <name type="synonym">Erysimum vernum</name>
    <dbReference type="NCBI Taxonomy" id="50458"/>
    <lineage>
        <taxon>Eukaryota</taxon>
        <taxon>Viridiplantae</taxon>
        <taxon>Streptophyta</taxon>
        <taxon>Embryophyta</taxon>
        <taxon>Tracheophyta</taxon>
        <taxon>Spermatophyta</taxon>
        <taxon>Magnoliopsida</taxon>
        <taxon>eudicotyledons</taxon>
        <taxon>Gunneridae</taxon>
        <taxon>Pentapetalae</taxon>
        <taxon>rosids</taxon>
        <taxon>malvids</taxon>
        <taxon>Brassicales</taxon>
        <taxon>Brassicaceae</taxon>
        <taxon>Cardamineae</taxon>
        <taxon>Barbarea</taxon>
    </lineage>
</organism>
<keyword id="KW-0150">Chloroplast</keyword>
<keyword id="KW-0472">Membrane</keyword>
<keyword id="KW-0602">Photosynthesis</keyword>
<keyword id="KW-0604">Photosystem II</keyword>
<keyword id="KW-0934">Plastid</keyword>
<keyword id="KW-0674">Reaction center</keyword>
<keyword id="KW-0793">Thylakoid</keyword>
<keyword id="KW-0812">Transmembrane</keyword>
<keyword id="KW-1133">Transmembrane helix</keyword>
<evidence type="ECO:0000255" key="1">
    <source>
        <dbReference type="HAMAP-Rule" id="MF_01317"/>
    </source>
</evidence>
<sequence>MTQSNPNEQNVELNRTSLYWGLLLIFVLAVLFSNYFFN</sequence>
<proteinExistence type="inferred from homology"/>
<comment type="function">
    <text evidence="1">One of the components of the core complex of photosystem II (PSII). PSII is a light-driven water:plastoquinone oxidoreductase that uses light energy to abstract electrons from H(2)O, generating O(2) and a proton gradient subsequently used for ATP formation. It consists of a core antenna complex that captures photons, and an electron transfer chain that converts photonic excitation into a charge separation. This subunit is found at the monomer-monomer interface and is required for correct PSII assembly and/or dimerization.</text>
</comment>
<comment type="subunit">
    <text evidence="1">PSII is composed of 1 copy each of membrane proteins PsbA, PsbB, PsbC, PsbD, PsbE, PsbF, PsbH, PsbI, PsbJ, PsbK, PsbL, PsbM, PsbT, PsbX, PsbY, PsbZ, Psb30/Ycf12, at least 3 peripheral proteins of the oxygen-evolving complex and a large number of cofactors. It forms dimeric complexes.</text>
</comment>
<comment type="subcellular location">
    <subcellularLocation>
        <location evidence="1">Plastid</location>
        <location evidence="1">Chloroplast thylakoid membrane</location>
        <topology evidence="1">Single-pass membrane protein</topology>
    </subcellularLocation>
</comment>
<comment type="similarity">
    <text evidence="1">Belongs to the PsbL family.</text>
</comment>
<accession>A4QKC0</accession>
<geneLocation type="chloroplast"/>
<reference key="1">
    <citation type="submission" date="2007-03" db="EMBL/GenBank/DDBJ databases">
        <title>Sequencing analysis of Barbarea verna chloroplast DNA.</title>
        <authorList>
            <person name="Hosouchi T."/>
            <person name="Tsuruoka H."/>
            <person name="Kotani H."/>
        </authorList>
    </citation>
    <scope>NUCLEOTIDE SEQUENCE [LARGE SCALE GENOMIC DNA]</scope>
</reference>
<feature type="chain" id="PRO_0000306223" description="Photosystem II reaction center protein L">
    <location>
        <begin position="1"/>
        <end position="38"/>
    </location>
</feature>
<feature type="transmembrane region" description="Helical" evidence="1">
    <location>
        <begin position="17"/>
        <end position="37"/>
    </location>
</feature>